<accession>Q63DH6</accession>
<proteinExistence type="inferred from homology"/>
<comment type="similarity">
    <text evidence="1">Belongs to the UPF0398 family.</text>
</comment>
<dbReference type="EMBL" id="CP000001">
    <property type="protein sequence ID" value="AAU18811.1"/>
    <property type="molecule type" value="Genomic_DNA"/>
</dbReference>
<dbReference type="RefSeq" id="WP_000862921.1">
    <property type="nucleotide sequence ID" value="NZ_CP009968.1"/>
</dbReference>
<dbReference type="SMR" id="Q63DH6"/>
<dbReference type="KEGG" id="bcz:BCE33L1439"/>
<dbReference type="PATRIC" id="fig|288681.22.peg.4112"/>
<dbReference type="Proteomes" id="UP000002612">
    <property type="component" value="Chromosome"/>
</dbReference>
<dbReference type="Gene3D" id="3.40.50.450">
    <property type="match status" value="1"/>
</dbReference>
<dbReference type="HAMAP" id="MF_01575">
    <property type="entry name" value="UPF0398"/>
    <property type="match status" value="1"/>
</dbReference>
<dbReference type="InterPro" id="IPR010697">
    <property type="entry name" value="YspA"/>
</dbReference>
<dbReference type="NCBIfam" id="NF010181">
    <property type="entry name" value="PRK13660.1"/>
    <property type="match status" value="1"/>
</dbReference>
<dbReference type="PANTHER" id="PTHR38440:SF1">
    <property type="entry name" value="UPF0398 PROTEIN SPR0331"/>
    <property type="match status" value="1"/>
</dbReference>
<dbReference type="PANTHER" id="PTHR38440">
    <property type="entry name" value="UPF0398 PROTEIN YPSA"/>
    <property type="match status" value="1"/>
</dbReference>
<dbReference type="Pfam" id="PF06908">
    <property type="entry name" value="YpsA"/>
    <property type="match status" value="1"/>
</dbReference>
<dbReference type="PIRSF" id="PIRSF021290">
    <property type="entry name" value="DUF1273"/>
    <property type="match status" value="1"/>
</dbReference>
<dbReference type="SUPFAM" id="SSF102405">
    <property type="entry name" value="MCP/YpsA-like"/>
    <property type="match status" value="1"/>
</dbReference>
<name>Y1439_BACCZ</name>
<evidence type="ECO:0000255" key="1">
    <source>
        <dbReference type="HAMAP-Rule" id="MF_01575"/>
    </source>
</evidence>
<organism>
    <name type="scientific">Bacillus cereus (strain ZK / E33L)</name>
    <dbReference type="NCBI Taxonomy" id="288681"/>
    <lineage>
        <taxon>Bacteria</taxon>
        <taxon>Bacillati</taxon>
        <taxon>Bacillota</taxon>
        <taxon>Bacilli</taxon>
        <taxon>Bacillales</taxon>
        <taxon>Bacillaceae</taxon>
        <taxon>Bacillus</taxon>
        <taxon>Bacillus cereus group</taxon>
    </lineage>
</organism>
<sequence>MKVIAVTGYKPFELGIFKNDHPGVECIKKALRRKLTAFVEDGLEWVIISGQLGVELWAAEVVFEIQVEYPDLKLAVFTPFLEQEEGWKEDNREYYEFILSQADHVDSITKRKYESPEQFKLKNQFFIEKSDALLAVYDEEKPGSPKYIVEAAKKKGEIENYHSYFILFSDLQDIIEEEQWNNAE</sequence>
<feature type="chain" id="PRO_0000267151" description="UPF0398 protein BCE33L1439">
    <location>
        <begin position="1"/>
        <end position="184"/>
    </location>
</feature>
<gene>
    <name type="ordered locus">BCE33L1439</name>
</gene>
<protein>
    <recommendedName>
        <fullName evidence="1">UPF0398 protein BCE33L1439</fullName>
    </recommendedName>
</protein>
<reference key="1">
    <citation type="journal article" date="2006" name="J. Bacteriol.">
        <title>Pathogenomic sequence analysis of Bacillus cereus and Bacillus thuringiensis isolates closely related to Bacillus anthracis.</title>
        <authorList>
            <person name="Han C.S."/>
            <person name="Xie G."/>
            <person name="Challacombe J.F."/>
            <person name="Altherr M.R."/>
            <person name="Bhotika S.S."/>
            <person name="Bruce D."/>
            <person name="Campbell C.S."/>
            <person name="Campbell M.L."/>
            <person name="Chen J."/>
            <person name="Chertkov O."/>
            <person name="Cleland C."/>
            <person name="Dimitrijevic M."/>
            <person name="Doggett N.A."/>
            <person name="Fawcett J.J."/>
            <person name="Glavina T."/>
            <person name="Goodwin L.A."/>
            <person name="Hill K.K."/>
            <person name="Hitchcock P."/>
            <person name="Jackson P.J."/>
            <person name="Keim P."/>
            <person name="Kewalramani A.R."/>
            <person name="Longmire J."/>
            <person name="Lucas S."/>
            <person name="Malfatti S."/>
            <person name="McMurry K."/>
            <person name="Meincke L.J."/>
            <person name="Misra M."/>
            <person name="Moseman B.L."/>
            <person name="Mundt M."/>
            <person name="Munk A.C."/>
            <person name="Okinaka R.T."/>
            <person name="Parson-Quintana B."/>
            <person name="Reilly L.P."/>
            <person name="Richardson P."/>
            <person name="Robinson D.L."/>
            <person name="Rubin E."/>
            <person name="Saunders E."/>
            <person name="Tapia R."/>
            <person name="Tesmer J.G."/>
            <person name="Thayer N."/>
            <person name="Thompson L.S."/>
            <person name="Tice H."/>
            <person name="Ticknor L.O."/>
            <person name="Wills P.L."/>
            <person name="Brettin T.S."/>
            <person name="Gilna P."/>
        </authorList>
    </citation>
    <scope>NUCLEOTIDE SEQUENCE [LARGE SCALE GENOMIC DNA]</scope>
    <source>
        <strain>ZK / E33L</strain>
    </source>
</reference>